<name>PLSX_FUSNN</name>
<sequence length="332" mass="36454">MKIALDAMSGDFAPISTVKGAIEALEEIEGLQVILVGKEGIIKEELKKYKYDTNRIEIKNADEVIVMTDDPVKAVREKKDSSMNVCIDLVKEKLAQASVSCGNTGALLASSQLKLKRIKGVLRPAIAVLFPNKKDSGTLFLDLGANSDSKPEFLNQFATMGSKYMEIFSGKKNPKVALLNIGEEETKGNELTRETYALLKENKDIDFYGNIESTKIMEGDVDVVVTDGYTGNILLKTSEGIGKFIFHIVKESIMESWISKLGALLVKGAMKKVKKKTEASEYGGAIFLGLSELSLKAHGNSDSRAIKNALKVASKFIELNFIEELRKTMEVE</sequence>
<protein>
    <recommendedName>
        <fullName evidence="1">Phosphate acyltransferase</fullName>
        <ecNumber evidence="1">2.3.1.274</ecNumber>
    </recommendedName>
    <alternativeName>
        <fullName evidence="1">Acyl-ACP phosphotransacylase</fullName>
    </alternativeName>
    <alternativeName>
        <fullName evidence="1">Acyl-[acyl-carrier-protein]--phosphate acyltransferase</fullName>
    </alternativeName>
    <alternativeName>
        <fullName evidence="1">Phosphate-acyl-ACP acyltransferase</fullName>
    </alternativeName>
</protein>
<evidence type="ECO:0000255" key="1">
    <source>
        <dbReference type="HAMAP-Rule" id="MF_00019"/>
    </source>
</evidence>
<gene>
    <name evidence="1" type="primary">plsX</name>
    <name type="ordered locus">FN0147</name>
</gene>
<feature type="chain" id="PRO_0000189881" description="Phosphate acyltransferase">
    <location>
        <begin position="1"/>
        <end position="332"/>
    </location>
</feature>
<proteinExistence type="inferred from homology"/>
<comment type="function">
    <text evidence="1">Catalyzes the reversible formation of acyl-phosphate (acyl-PO(4)) from acyl-[acyl-carrier-protein] (acyl-ACP). This enzyme utilizes acyl-ACP as fatty acyl donor, but not acyl-CoA.</text>
</comment>
<comment type="catalytic activity">
    <reaction evidence="1">
        <text>a fatty acyl-[ACP] + phosphate = an acyl phosphate + holo-[ACP]</text>
        <dbReference type="Rhea" id="RHEA:42292"/>
        <dbReference type="Rhea" id="RHEA-COMP:9685"/>
        <dbReference type="Rhea" id="RHEA-COMP:14125"/>
        <dbReference type="ChEBI" id="CHEBI:43474"/>
        <dbReference type="ChEBI" id="CHEBI:59918"/>
        <dbReference type="ChEBI" id="CHEBI:64479"/>
        <dbReference type="ChEBI" id="CHEBI:138651"/>
        <dbReference type="EC" id="2.3.1.274"/>
    </reaction>
</comment>
<comment type="pathway">
    <text evidence="1">Lipid metabolism; phospholipid metabolism.</text>
</comment>
<comment type="subunit">
    <text evidence="1">Homodimer. Probably interacts with PlsY.</text>
</comment>
<comment type="subcellular location">
    <subcellularLocation>
        <location evidence="1">Cytoplasm</location>
    </subcellularLocation>
    <text evidence="1">Associated with the membrane possibly through PlsY.</text>
</comment>
<comment type="similarity">
    <text evidence="1">Belongs to the PlsX family.</text>
</comment>
<accession>Q8RGX8</accession>
<organism>
    <name type="scientific">Fusobacterium nucleatum subsp. nucleatum (strain ATCC 25586 / DSM 15643 / BCRC 10681 / CIP 101130 / JCM 8532 / KCTC 2640 / LMG 13131 / VPI 4355)</name>
    <dbReference type="NCBI Taxonomy" id="190304"/>
    <lineage>
        <taxon>Bacteria</taxon>
        <taxon>Fusobacteriati</taxon>
        <taxon>Fusobacteriota</taxon>
        <taxon>Fusobacteriia</taxon>
        <taxon>Fusobacteriales</taxon>
        <taxon>Fusobacteriaceae</taxon>
        <taxon>Fusobacterium</taxon>
    </lineage>
</organism>
<dbReference type="EC" id="2.3.1.274" evidence="1"/>
<dbReference type="EMBL" id="AE009951">
    <property type="protein sequence ID" value="AAL94353.1"/>
    <property type="molecule type" value="Genomic_DNA"/>
</dbReference>
<dbReference type="RefSeq" id="NP_603054.1">
    <property type="nucleotide sequence ID" value="NC_003454.1"/>
</dbReference>
<dbReference type="RefSeq" id="WP_011016179.1">
    <property type="nucleotide sequence ID" value="NZ_OZ209243.1"/>
</dbReference>
<dbReference type="SMR" id="Q8RGX8"/>
<dbReference type="FunCoup" id="Q8RGX8">
    <property type="interactions" value="243"/>
</dbReference>
<dbReference type="STRING" id="190304.FN0147"/>
<dbReference type="PaxDb" id="190304-FN0147"/>
<dbReference type="EnsemblBacteria" id="AAL94353">
    <property type="protein sequence ID" value="AAL94353"/>
    <property type="gene ID" value="FN0147"/>
</dbReference>
<dbReference type="GeneID" id="79783167"/>
<dbReference type="KEGG" id="fnu:FN0147"/>
<dbReference type="PATRIC" id="fig|190304.8.peg.727"/>
<dbReference type="eggNOG" id="COG0416">
    <property type="taxonomic scope" value="Bacteria"/>
</dbReference>
<dbReference type="HOGENOM" id="CLU_039379_1_1_0"/>
<dbReference type="InParanoid" id="Q8RGX8"/>
<dbReference type="BioCyc" id="FNUC190304:G1FZS-750-MONOMER"/>
<dbReference type="UniPathway" id="UPA00085"/>
<dbReference type="Proteomes" id="UP000002521">
    <property type="component" value="Chromosome"/>
</dbReference>
<dbReference type="GO" id="GO:0005737">
    <property type="term" value="C:cytoplasm"/>
    <property type="evidence" value="ECO:0007669"/>
    <property type="project" value="UniProtKB-SubCell"/>
</dbReference>
<dbReference type="GO" id="GO:0043811">
    <property type="term" value="F:phosphate:acyl-[acyl carrier protein] acyltransferase activity"/>
    <property type="evidence" value="ECO:0007669"/>
    <property type="project" value="UniProtKB-UniRule"/>
</dbReference>
<dbReference type="GO" id="GO:0006633">
    <property type="term" value="P:fatty acid biosynthetic process"/>
    <property type="evidence" value="ECO:0007669"/>
    <property type="project" value="UniProtKB-UniRule"/>
</dbReference>
<dbReference type="GO" id="GO:0008654">
    <property type="term" value="P:phospholipid biosynthetic process"/>
    <property type="evidence" value="ECO:0007669"/>
    <property type="project" value="UniProtKB-KW"/>
</dbReference>
<dbReference type="Gene3D" id="3.40.718.10">
    <property type="entry name" value="Isopropylmalate Dehydrogenase"/>
    <property type="match status" value="1"/>
</dbReference>
<dbReference type="HAMAP" id="MF_00019">
    <property type="entry name" value="PlsX"/>
    <property type="match status" value="1"/>
</dbReference>
<dbReference type="InterPro" id="IPR003664">
    <property type="entry name" value="FA_synthesis"/>
</dbReference>
<dbReference type="InterPro" id="IPR012281">
    <property type="entry name" value="Phospholipid_synth_PlsX-like"/>
</dbReference>
<dbReference type="NCBIfam" id="TIGR00182">
    <property type="entry name" value="plsX"/>
    <property type="match status" value="1"/>
</dbReference>
<dbReference type="PANTHER" id="PTHR30100">
    <property type="entry name" value="FATTY ACID/PHOSPHOLIPID SYNTHESIS PROTEIN PLSX"/>
    <property type="match status" value="1"/>
</dbReference>
<dbReference type="PANTHER" id="PTHR30100:SF1">
    <property type="entry name" value="PHOSPHATE ACYLTRANSFERASE"/>
    <property type="match status" value="1"/>
</dbReference>
<dbReference type="Pfam" id="PF02504">
    <property type="entry name" value="FA_synthesis"/>
    <property type="match status" value="1"/>
</dbReference>
<dbReference type="PIRSF" id="PIRSF002465">
    <property type="entry name" value="Phsphlp_syn_PlsX"/>
    <property type="match status" value="1"/>
</dbReference>
<dbReference type="SUPFAM" id="SSF53659">
    <property type="entry name" value="Isocitrate/Isopropylmalate dehydrogenase-like"/>
    <property type="match status" value="1"/>
</dbReference>
<keyword id="KW-0963">Cytoplasm</keyword>
<keyword id="KW-0444">Lipid biosynthesis</keyword>
<keyword id="KW-0443">Lipid metabolism</keyword>
<keyword id="KW-0594">Phospholipid biosynthesis</keyword>
<keyword id="KW-1208">Phospholipid metabolism</keyword>
<keyword id="KW-1185">Reference proteome</keyword>
<keyword id="KW-0808">Transferase</keyword>
<reference key="1">
    <citation type="journal article" date="2002" name="J. Bacteriol.">
        <title>Genome sequence and analysis of the oral bacterium Fusobacterium nucleatum strain ATCC 25586.</title>
        <authorList>
            <person name="Kapatral V."/>
            <person name="Anderson I."/>
            <person name="Ivanova N."/>
            <person name="Reznik G."/>
            <person name="Los T."/>
            <person name="Lykidis A."/>
            <person name="Bhattacharyya A."/>
            <person name="Bartman A."/>
            <person name="Gardner W."/>
            <person name="Grechkin G."/>
            <person name="Zhu L."/>
            <person name="Vasieva O."/>
            <person name="Chu L."/>
            <person name="Kogan Y."/>
            <person name="Chaga O."/>
            <person name="Goltsman E."/>
            <person name="Bernal A."/>
            <person name="Larsen N."/>
            <person name="D'Souza M."/>
            <person name="Walunas T."/>
            <person name="Pusch G."/>
            <person name="Haselkorn R."/>
            <person name="Fonstein M."/>
            <person name="Kyrpides N.C."/>
            <person name="Overbeek R."/>
        </authorList>
    </citation>
    <scope>NUCLEOTIDE SEQUENCE [LARGE SCALE GENOMIC DNA]</scope>
    <source>
        <strain>ATCC 25586 / DSM 15643 / BCRC 10681 / CIP 101130 / JCM 8532 / KCTC 2640 / LMG 13131 / VPI 4355</strain>
    </source>
</reference>